<dbReference type="EMBL" id="AE014075">
    <property type="protein sequence ID" value="AAN80099.1"/>
    <property type="status" value="ALT_INIT"/>
    <property type="molecule type" value="Genomic_DNA"/>
</dbReference>
<dbReference type="RefSeq" id="WP_000406402.1">
    <property type="nucleotide sequence ID" value="NZ_CP051263.1"/>
</dbReference>
<dbReference type="SMR" id="Q8FI24"/>
<dbReference type="STRING" id="199310.c1634"/>
<dbReference type="KEGG" id="ecc:c1634"/>
<dbReference type="eggNOG" id="COG3067">
    <property type="taxonomic scope" value="Bacteria"/>
</dbReference>
<dbReference type="HOGENOM" id="CLU_041110_0_0_6"/>
<dbReference type="Proteomes" id="UP000001410">
    <property type="component" value="Chromosome"/>
</dbReference>
<dbReference type="GO" id="GO:0005886">
    <property type="term" value="C:plasma membrane"/>
    <property type="evidence" value="ECO:0007669"/>
    <property type="project" value="UniProtKB-SubCell"/>
</dbReference>
<dbReference type="GO" id="GO:0015385">
    <property type="term" value="F:sodium:proton antiporter activity"/>
    <property type="evidence" value="ECO:0007669"/>
    <property type="project" value="InterPro"/>
</dbReference>
<dbReference type="HAMAP" id="MF_01599">
    <property type="entry name" value="NhaB"/>
    <property type="match status" value="1"/>
</dbReference>
<dbReference type="InterPro" id="IPR004671">
    <property type="entry name" value="Na+/H+_antiporter_NhaB"/>
</dbReference>
<dbReference type="NCBIfam" id="TIGR00774">
    <property type="entry name" value="NhaB"/>
    <property type="match status" value="1"/>
</dbReference>
<dbReference type="NCBIfam" id="NF007093">
    <property type="entry name" value="PRK09547.1"/>
    <property type="match status" value="1"/>
</dbReference>
<dbReference type="PANTHER" id="PTHR43302:SF1">
    <property type="entry name" value="NA(+)_H(+) ANTIPORTER NHAB"/>
    <property type="match status" value="1"/>
</dbReference>
<dbReference type="PANTHER" id="PTHR43302">
    <property type="entry name" value="TRANSPORTER ARSB-RELATED"/>
    <property type="match status" value="1"/>
</dbReference>
<dbReference type="Pfam" id="PF06450">
    <property type="entry name" value="NhaB"/>
    <property type="match status" value="1"/>
</dbReference>
<gene>
    <name evidence="1" type="primary">nhaB</name>
    <name type="ordered locus">c1634</name>
</gene>
<proteinExistence type="inferred from homology"/>
<accession>Q8FI24</accession>
<name>NHAB_ECOL6</name>
<sequence>MEISWGRALWRNFLGQSPDWYKLALIIFLIVNPLIFLISPFVAGWLLVAEFIFTLAMALKCYPLLPGGLLAIEAVFIGMTSAEHVREEVAANLEVLLLLMFMVAGIYFMKQLLLFIFTRLLLSIRSKMLLSLSFCVAAAFLSAFLDALTVVAVVISVAVGFYGIYHRVASSRTEDTDLQDDSHIDKHYKVVLEQFRGFLRSLMMHAGVGTALGGVMTMVGEPQNLIIAKAAGWHFGDFFLRMSPVTVPVLICGLLTCLLVEKLRWFGYGETLPEKVREVLQQFDDQSRNQRTRQDKIRLIVQAIIGVWLVTALALHLAEVGLIGLSVIILATSLTGVTDEHAIGKAFTESLPFTALLTVFFSVVAVIIDQQLFSPIIQFVLQASEHAQLSLFYIFNGLLSSISDNVFVGTIYINEAKAAMESGAITLKQYELLAVAINTGTNLPSVATPNGQAAFLFLLTSALAPLIRLSYGRMVWMALPYTLVLTLVGLLCVEFTLAPVTEWFMQMGWIATL</sequence>
<keyword id="KW-0050">Antiport</keyword>
<keyword id="KW-0997">Cell inner membrane</keyword>
<keyword id="KW-1003">Cell membrane</keyword>
<keyword id="KW-0406">Ion transport</keyword>
<keyword id="KW-0472">Membrane</keyword>
<keyword id="KW-1185">Reference proteome</keyword>
<keyword id="KW-0915">Sodium</keyword>
<keyword id="KW-0739">Sodium transport</keyword>
<keyword id="KW-0812">Transmembrane</keyword>
<keyword id="KW-1133">Transmembrane helix</keyword>
<keyword id="KW-0813">Transport</keyword>
<comment type="function">
    <text evidence="1">Na(+)/H(+) antiporter that extrudes sodium in exchange for external protons.</text>
</comment>
<comment type="catalytic activity">
    <reaction evidence="1">
        <text>2 Na(+)(in) + 3 H(+)(out) = 2 Na(+)(out) + 3 H(+)(in)</text>
        <dbReference type="Rhea" id="RHEA:29247"/>
        <dbReference type="ChEBI" id="CHEBI:15378"/>
        <dbReference type="ChEBI" id="CHEBI:29101"/>
    </reaction>
    <physiologicalReaction direction="left-to-right" evidence="1">
        <dbReference type="Rhea" id="RHEA:29248"/>
    </physiologicalReaction>
</comment>
<comment type="subcellular location">
    <subcellularLocation>
        <location evidence="1">Cell inner membrane</location>
        <topology evidence="1">Multi-pass membrane protein</topology>
    </subcellularLocation>
</comment>
<comment type="similarity">
    <text evidence="1">Belongs to the NhaB Na(+)/H(+) (TC 2.A.34) antiporter family.</text>
</comment>
<comment type="sequence caution" evidence="2">
    <conflict type="erroneous initiation">
        <sequence resource="EMBL-CDS" id="AAN80099"/>
    </conflict>
</comment>
<organism>
    <name type="scientific">Escherichia coli O6:H1 (strain CFT073 / ATCC 700928 / UPEC)</name>
    <dbReference type="NCBI Taxonomy" id="199310"/>
    <lineage>
        <taxon>Bacteria</taxon>
        <taxon>Pseudomonadati</taxon>
        <taxon>Pseudomonadota</taxon>
        <taxon>Gammaproteobacteria</taxon>
        <taxon>Enterobacterales</taxon>
        <taxon>Enterobacteriaceae</taxon>
        <taxon>Escherichia</taxon>
    </lineage>
</organism>
<reference key="1">
    <citation type="journal article" date="2002" name="Proc. Natl. Acad. Sci. U.S.A.">
        <title>Extensive mosaic structure revealed by the complete genome sequence of uropathogenic Escherichia coli.</title>
        <authorList>
            <person name="Welch R.A."/>
            <person name="Burland V."/>
            <person name="Plunkett G. III"/>
            <person name="Redford P."/>
            <person name="Roesch P."/>
            <person name="Rasko D."/>
            <person name="Buckles E.L."/>
            <person name="Liou S.-R."/>
            <person name="Boutin A."/>
            <person name="Hackett J."/>
            <person name="Stroud D."/>
            <person name="Mayhew G.F."/>
            <person name="Rose D.J."/>
            <person name="Zhou S."/>
            <person name="Schwartz D.C."/>
            <person name="Perna N.T."/>
            <person name="Mobley H.L.T."/>
            <person name="Donnenberg M.S."/>
            <person name="Blattner F.R."/>
        </authorList>
    </citation>
    <scope>NUCLEOTIDE SEQUENCE [LARGE SCALE GENOMIC DNA]</scope>
    <source>
        <strain>CFT073 / ATCC 700928 / UPEC</strain>
    </source>
</reference>
<evidence type="ECO:0000255" key="1">
    <source>
        <dbReference type="HAMAP-Rule" id="MF_01599"/>
    </source>
</evidence>
<evidence type="ECO:0000305" key="2"/>
<protein>
    <recommendedName>
        <fullName evidence="1">Na(+)/H(+) antiporter NhaB</fullName>
    </recommendedName>
    <alternativeName>
        <fullName evidence="1">Sodium/proton antiporter NhaB</fullName>
    </alternativeName>
</protein>
<feature type="chain" id="PRO_0000333092" description="Na(+)/H(+) antiporter NhaB">
    <location>
        <begin position="1"/>
        <end position="513"/>
    </location>
</feature>
<feature type="transmembrane region" description="Helical" evidence="1">
    <location>
        <begin position="23"/>
        <end position="43"/>
    </location>
</feature>
<feature type="transmembrane region" description="Helical" evidence="1">
    <location>
        <begin position="52"/>
        <end position="72"/>
    </location>
</feature>
<feature type="transmembrane region" description="Helical" evidence="1">
    <location>
        <begin position="97"/>
        <end position="117"/>
    </location>
</feature>
<feature type="transmembrane region" description="Helical" evidence="1">
    <location>
        <begin position="120"/>
        <end position="140"/>
    </location>
</feature>
<feature type="transmembrane region" description="Helical" evidence="1">
    <location>
        <begin position="144"/>
        <end position="164"/>
    </location>
</feature>
<feature type="transmembrane region" description="Helical" evidence="1">
    <location>
        <begin position="202"/>
        <end position="222"/>
    </location>
</feature>
<feature type="transmembrane region" description="Helical" evidence="1">
    <location>
        <begin position="238"/>
        <end position="258"/>
    </location>
</feature>
<feature type="transmembrane region" description="Helical" evidence="1">
    <location>
        <begin position="303"/>
        <end position="323"/>
    </location>
</feature>
<feature type="transmembrane region" description="Helical" evidence="1">
    <location>
        <begin position="348"/>
        <end position="368"/>
    </location>
</feature>
<feature type="transmembrane region" description="Helical" evidence="1">
    <location>
        <begin position="391"/>
        <end position="411"/>
    </location>
</feature>
<feature type="transmembrane region" description="Helical" evidence="1">
    <location>
        <begin position="447"/>
        <end position="467"/>
    </location>
</feature>
<feature type="transmembrane region" description="Helical" evidence="1">
    <location>
        <begin position="475"/>
        <end position="495"/>
    </location>
</feature>